<evidence type="ECO:0000255" key="1">
    <source>
        <dbReference type="PROSITE-ProRule" id="PRU00159"/>
    </source>
</evidence>
<evidence type="ECO:0000255" key="2">
    <source>
        <dbReference type="PROSITE-ProRule" id="PRU10027"/>
    </source>
</evidence>
<evidence type="ECO:0000269" key="3">
    <source>
    </source>
</evidence>
<evidence type="ECO:0000269" key="4">
    <source>
    </source>
</evidence>
<evidence type="ECO:0000269" key="5">
    <source ref="1"/>
</evidence>
<evidence type="ECO:0000305" key="6"/>
<comment type="function">
    <text evidence="5">Calcium-independent kinase involved in light-dependent phosphoenolpyruvate carboxylase phosphorylation.</text>
</comment>
<comment type="catalytic activity">
    <reaction evidence="5">
        <text>L-seryl-[protein] + ATP = O-phospho-L-seryl-[protein] + ADP + H(+)</text>
        <dbReference type="Rhea" id="RHEA:17989"/>
        <dbReference type="Rhea" id="RHEA-COMP:9863"/>
        <dbReference type="Rhea" id="RHEA-COMP:11604"/>
        <dbReference type="ChEBI" id="CHEBI:15378"/>
        <dbReference type="ChEBI" id="CHEBI:29999"/>
        <dbReference type="ChEBI" id="CHEBI:30616"/>
        <dbReference type="ChEBI" id="CHEBI:83421"/>
        <dbReference type="ChEBI" id="CHEBI:456216"/>
        <dbReference type="EC" id="2.7.11.1"/>
    </reaction>
</comment>
<comment type="catalytic activity">
    <reaction evidence="5">
        <text>L-threonyl-[protein] + ATP = O-phospho-L-threonyl-[protein] + ADP + H(+)</text>
        <dbReference type="Rhea" id="RHEA:46608"/>
        <dbReference type="Rhea" id="RHEA-COMP:11060"/>
        <dbReference type="Rhea" id="RHEA-COMP:11605"/>
        <dbReference type="ChEBI" id="CHEBI:15378"/>
        <dbReference type="ChEBI" id="CHEBI:30013"/>
        <dbReference type="ChEBI" id="CHEBI:30616"/>
        <dbReference type="ChEBI" id="CHEBI:61977"/>
        <dbReference type="ChEBI" id="CHEBI:456216"/>
        <dbReference type="EC" id="2.7.11.1"/>
    </reaction>
</comment>
<comment type="tissue specificity">
    <text evidence="5">Expressed in flowers and roots, and at lower levels in cauline leaves. Barely detectable in rosette leaves and stems.</text>
</comment>
<comment type="induction">
    <text evidence="3 4 5">Up-regulated by light, cycloheximide, phosphate starvation, carbon availability and high pH. Down-regulated by phosphate and phosphite. Very high sensitivity to phosphate at low pH. Not under circadian control and not affected by nitrogen supply.</text>
</comment>
<comment type="miscellaneous">
    <text>Lacks the autoinhibitory region and EF hands found in calcium-dependent protein kinases.</text>
</comment>
<comment type="similarity">
    <text evidence="1">Belongs to the protein kinase superfamily. Ser/Thr protein kinase family.</text>
</comment>
<comment type="sequence caution" evidence="6">
    <conflict type="erroneous gene model prediction">
        <sequence resource="EMBL-CDS" id="AAF63784"/>
    </conflict>
</comment>
<reference key="1">
    <citation type="journal article" date="2002" name="Plant Cell Environ.">
        <title>Arabidopsis thaliana contains two phosphoenolpyruvate carboxylase kinase genes with different expression patterns.</title>
        <authorList>
            <person name="Fontaine V."/>
            <person name="Hartwell J."/>
            <person name="Jenkins G.I."/>
            <person name="Nimmo H.G."/>
        </authorList>
    </citation>
    <scope>NUCLEOTIDE SEQUENCE [GENOMIC DNA / MRNA]</scope>
    <scope>FUNCTION</scope>
    <scope>CATALYTIC ACTIVITY</scope>
    <scope>TISSUE SPECIFICITY</scope>
    <scope>INDUCTION BY LIGHT AND CYCLOHEXIMIDE</scope>
    <source>
        <strain>cv. Landsberg erecta</strain>
    </source>
</reference>
<reference key="2">
    <citation type="journal article" date="2000" name="Nature">
        <title>Sequence and analysis of chromosome 3 of the plant Arabidopsis thaliana.</title>
        <authorList>
            <person name="Salanoubat M."/>
            <person name="Lemcke K."/>
            <person name="Rieger M."/>
            <person name="Ansorge W."/>
            <person name="Unseld M."/>
            <person name="Fartmann B."/>
            <person name="Valle G."/>
            <person name="Bloecker H."/>
            <person name="Perez-Alonso M."/>
            <person name="Obermaier B."/>
            <person name="Delseny M."/>
            <person name="Boutry M."/>
            <person name="Grivell L.A."/>
            <person name="Mache R."/>
            <person name="Puigdomenech P."/>
            <person name="De Simone V."/>
            <person name="Choisne N."/>
            <person name="Artiguenave F."/>
            <person name="Robert C."/>
            <person name="Brottier P."/>
            <person name="Wincker P."/>
            <person name="Cattolico L."/>
            <person name="Weissenbach J."/>
            <person name="Saurin W."/>
            <person name="Quetier F."/>
            <person name="Schaefer M."/>
            <person name="Mueller-Auer S."/>
            <person name="Gabel C."/>
            <person name="Fuchs M."/>
            <person name="Benes V."/>
            <person name="Wurmbach E."/>
            <person name="Drzonek H."/>
            <person name="Erfle H."/>
            <person name="Jordan N."/>
            <person name="Bangert S."/>
            <person name="Wiedelmann R."/>
            <person name="Kranz H."/>
            <person name="Voss H."/>
            <person name="Holland R."/>
            <person name="Brandt P."/>
            <person name="Nyakatura G."/>
            <person name="Vezzi A."/>
            <person name="D'Angelo M."/>
            <person name="Pallavicini A."/>
            <person name="Toppo S."/>
            <person name="Simionati B."/>
            <person name="Conrad A."/>
            <person name="Hornischer K."/>
            <person name="Kauer G."/>
            <person name="Loehnert T.-H."/>
            <person name="Nordsiek G."/>
            <person name="Reichelt J."/>
            <person name="Scharfe M."/>
            <person name="Schoen O."/>
            <person name="Bargues M."/>
            <person name="Terol J."/>
            <person name="Climent J."/>
            <person name="Navarro P."/>
            <person name="Collado C."/>
            <person name="Perez-Perez A."/>
            <person name="Ottenwaelder B."/>
            <person name="Duchemin D."/>
            <person name="Cooke R."/>
            <person name="Laudie M."/>
            <person name="Berger-Llauro C."/>
            <person name="Purnelle B."/>
            <person name="Masuy D."/>
            <person name="de Haan M."/>
            <person name="Maarse A.C."/>
            <person name="Alcaraz J.-P."/>
            <person name="Cottet A."/>
            <person name="Casacuberta E."/>
            <person name="Monfort A."/>
            <person name="Argiriou A."/>
            <person name="Flores M."/>
            <person name="Liguori R."/>
            <person name="Vitale D."/>
            <person name="Mannhaupt G."/>
            <person name="Haase D."/>
            <person name="Schoof H."/>
            <person name="Rudd S."/>
            <person name="Zaccaria P."/>
            <person name="Mewes H.-W."/>
            <person name="Mayer K.F.X."/>
            <person name="Kaul S."/>
            <person name="Town C.D."/>
            <person name="Koo H.L."/>
            <person name="Tallon L.J."/>
            <person name="Jenkins J."/>
            <person name="Rooney T."/>
            <person name="Rizzo M."/>
            <person name="Walts A."/>
            <person name="Utterback T."/>
            <person name="Fujii C.Y."/>
            <person name="Shea T.P."/>
            <person name="Creasy T.H."/>
            <person name="Haas B."/>
            <person name="Maiti R."/>
            <person name="Wu D."/>
            <person name="Peterson J."/>
            <person name="Van Aken S."/>
            <person name="Pai G."/>
            <person name="Militscher J."/>
            <person name="Sellers P."/>
            <person name="Gill J.E."/>
            <person name="Feldblyum T.V."/>
            <person name="Preuss D."/>
            <person name="Lin X."/>
            <person name="Nierman W.C."/>
            <person name="Salzberg S.L."/>
            <person name="White O."/>
            <person name="Venter J.C."/>
            <person name="Fraser C.M."/>
            <person name="Kaneko T."/>
            <person name="Nakamura Y."/>
            <person name="Sato S."/>
            <person name="Kato T."/>
            <person name="Asamizu E."/>
            <person name="Sasamoto S."/>
            <person name="Kimura T."/>
            <person name="Idesawa K."/>
            <person name="Kawashima K."/>
            <person name="Kishida Y."/>
            <person name="Kiyokawa C."/>
            <person name="Kohara M."/>
            <person name="Matsumoto M."/>
            <person name="Matsuno A."/>
            <person name="Muraki A."/>
            <person name="Nakayama S."/>
            <person name="Nakazaki N."/>
            <person name="Shinpo S."/>
            <person name="Takeuchi C."/>
            <person name="Wada T."/>
            <person name="Watanabe A."/>
            <person name="Yamada M."/>
            <person name="Yasuda M."/>
            <person name="Tabata S."/>
        </authorList>
    </citation>
    <scope>NUCLEOTIDE SEQUENCE [LARGE SCALE GENOMIC DNA]</scope>
    <source>
        <strain>cv. Columbia</strain>
    </source>
</reference>
<reference key="3">
    <citation type="journal article" date="2017" name="Plant J.">
        <title>Araport11: a complete reannotation of the Arabidopsis thaliana reference genome.</title>
        <authorList>
            <person name="Cheng C.Y."/>
            <person name="Krishnakumar V."/>
            <person name="Chan A.P."/>
            <person name="Thibaud-Nissen F."/>
            <person name="Schobel S."/>
            <person name="Town C.D."/>
        </authorList>
    </citation>
    <scope>GENOME REANNOTATION</scope>
    <source>
        <strain>cv. Columbia</strain>
    </source>
</reference>
<reference key="4">
    <citation type="journal article" date="2008" name="Plant Cell Environ.">
        <title>pH and carbon supply control the expression of phosphoenolpyruvate carboxylase kinase genes in Arabidopsis thaliana.</title>
        <authorList>
            <person name="Chen Z.H."/>
            <person name="Jenkins G.I."/>
            <person name="Nimmo H.G."/>
        </authorList>
    </citation>
    <scope>INDUCTION BY CARBON; NITROGEN AND PHOSPHITE</scope>
    <source>
        <strain>cv. Landsberg erecta</strain>
    </source>
</reference>
<reference key="5">
    <citation type="journal article" date="2009" name="Biochem. J.">
        <title>In vivo regulatory phosphorylation of the phosphoenolpyruvate carboxylase AtPPC1 in phosphate-starved Arabidopsis thaliana.</title>
        <authorList>
            <person name="Gregory A.L."/>
            <person name="Hurley B.A."/>
            <person name="Tran H.T."/>
            <person name="Valentine A.J."/>
            <person name="She Y.-M."/>
            <person name="Knowles V.L."/>
            <person name="Plaxton W.C."/>
        </authorList>
    </citation>
    <scope>INDUCTION BY PHOSPHATE</scope>
    <source>
        <strain>cv. Landsberg erecta</strain>
    </source>
</reference>
<name>PPCK2_ARATH</name>
<gene>
    <name type="primary">PPCK2</name>
    <name type="ordered locus">At3g04530</name>
    <name type="ORF">T27C4.19</name>
</gene>
<accession>Q93VK0</accession>
<accession>Q9M834</accession>
<protein>
    <recommendedName>
        <fullName>Phosphoenolpyruvate carboxylase kinase 2</fullName>
        <shortName>AtPPCK2</shortName>
        <ecNumber>2.7.11.1</ecNumber>
    </recommendedName>
</protein>
<dbReference type="EC" id="2.7.11.1"/>
<dbReference type="EMBL" id="AF358915">
    <property type="protein sequence ID" value="AAK43710.1"/>
    <property type="molecule type" value="mRNA"/>
</dbReference>
<dbReference type="EMBL" id="AY040830">
    <property type="protein sequence ID" value="AAK84668.1"/>
    <property type="molecule type" value="Genomic_DNA"/>
</dbReference>
<dbReference type="EMBL" id="AC022287">
    <property type="protein sequence ID" value="AAF63784.1"/>
    <property type="status" value="ALT_SEQ"/>
    <property type="molecule type" value="Genomic_DNA"/>
</dbReference>
<dbReference type="EMBL" id="CP002686">
    <property type="protein sequence ID" value="AEE74093.1"/>
    <property type="molecule type" value="Genomic_DNA"/>
</dbReference>
<dbReference type="RefSeq" id="NP_566229.1">
    <property type="nucleotide sequence ID" value="NM_111324.4"/>
</dbReference>
<dbReference type="SMR" id="Q93VK0"/>
<dbReference type="BioGRID" id="4944">
    <property type="interactions" value="1"/>
</dbReference>
<dbReference type="FunCoup" id="Q93VK0">
    <property type="interactions" value="396"/>
</dbReference>
<dbReference type="IntAct" id="Q93VK0">
    <property type="interactions" value="1"/>
</dbReference>
<dbReference type="STRING" id="3702.Q93VK0"/>
<dbReference type="PaxDb" id="3702-AT3G04530.1"/>
<dbReference type="EnsemblPlants" id="AT3G04530.1">
    <property type="protein sequence ID" value="AT3G04530.1"/>
    <property type="gene ID" value="AT3G04530"/>
</dbReference>
<dbReference type="GeneID" id="819609"/>
<dbReference type="Gramene" id="AT3G04530.1">
    <property type="protein sequence ID" value="AT3G04530.1"/>
    <property type="gene ID" value="AT3G04530"/>
</dbReference>
<dbReference type="KEGG" id="ath:AT3G04530"/>
<dbReference type="Araport" id="AT3G04530"/>
<dbReference type="TAIR" id="AT3G04530">
    <property type="gene designation" value="PPCK2"/>
</dbReference>
<dbReference type="eggNOG" id="KOG0032">
    <property type="taxonomic scope" value="Eukaryota"/>
</dbReference>
<dbReference type="HOGENOM" id="CLU_000288_63_0_1"/>
<dbReference type="InParanoid" id="Q93VK0"/>
<dbReference type="OMA" id="ECIETEP"/>
<dbReference type="BioCyc" id="ARA:AT3G04530-MONOMER"/>
<dbReference type="BRENDA" id="4.1.1.49">
    <property type="organism ID" value="399"/>
</dbReference>
<dbReference type="PRO" id="PR:Q93VK0"/>
<dbReference type="Proteomes" id="UP000006548">
    <property type="component" value="Chromosome 3"/>
</dbReference>
<dbReference type="ExpressionAtlas" id="Q93VK0">
    <property type="expression patterns" value="baseline and differential"/>
</dbReference>
<dbReference type="GO" id="GO:0005524">
    <property type="term" value="F:ATP binding"/>
    <property type="evidence" value="ECO:0007669"/>
    <property type="project" value="UniProtKB-KW"/>
</dbReference>
<dbReference type="GO" id="GO:0106310">
    <property type="term" value="F:protein serine kinase activity"/>
    <property type="evidence" value="ECO:0007669"/>
    <property type="project" value="RHEA"/>
</dbReference>
<dbReference type="GO" id="GO:0004674">
    <property type="term" value="F:protein serine/threonine kinase activity"/>
    <property type="evidence" value="ECO:0000314"/>
    <property type="project" value="UniProtKB"/>
</dbReference>
<dbReference type="GO" id="GO:0016036">
    <property type="term" value="P:cellular response to phosphate starvation"/>
    <property type="evidence" value="ECO:0000270"/>
    <property type="project" value="TAIR"/>
</dbReference>
<dbReference type="GO" id="GO:0006468">
    <property type="term" value="P:protein phosphorylation"/>
    <property type="evidence" value="ECO:0000314"/>
    <property type="project" value="UniProtKB"/>
</dbReference>
<dbReference type="GO" id="GO:0046898">
    <property type="term" value="P:response to cycloheximide"/>
    <property type="evidence" value="ECO:0000314"/>
    <property type="project" value="UniProtKB"/>
</dbReference>
<dbReference type="GO" id="GO:0009416">
    <property type="term" value="P:response to light stimulus"/>
    <property type="evidence" value="ECO:0000314"/>
    <property type="project" value="UniProtKB"/>
</dbReference>
<dbReference type="CDD" id="cd05117">
    <property type="entry name" value="STKc_CAMK"/>
    <property type="match status" value="1"/>
</dbReference>
<dbReference type="FunFam" id="1.10.510.10:FF:000564">
    <property type="entry name" value="Phosphoenolpyruvate carboxylase kinase 1"/>
    <property type="match status" value="1"/>
</dbReference>
<dbReference type="FunFam" id="3.30.200.20:FF:000733">
    <property type="entry name" value="Phosphoenolpyruvate carboxylase kinase 1"/>
    <property type="match status" value="1"/>
</dbReference>
<dbReference type="Gene3D" id="3.30.200.20">
    <property type="entry name" value="Phosphorylase Kinase, domain 1"/>
    <property type="match status" value="1"/>
</dbReference>
<dbReference type="Gene3D" id="1.10.510.10">
    <property type="entry name" value="Transferase(Phosphotransferase) domain 1"/>
    <property type="match status" value="1"/>
</dbReference>
<dbReference type="InterPro" id="IPR050205">
    <property type="entry name" value="CDPK_Ser/Thr_kinases"/>
</dbReference>
<dbReference type="InterPro" id="IPR011009">
    <property type="entry name" value="Kinase-like_dom_sf"/>
</dbReference>
<dbReference type="InterPro" id="IPR000719">
    <property type="entry name" value="Prot_kinase_dom"/>
</dbReference>
<dbReference type="InterPro" id="IPR017441">
    <property type="entry name" value="Protein_kinase_ATP_BS"/>
</dbReference>
<dbReference type="InterPro" id="IPR008271">
    <property type="entry name" value="Ser/Thr_kinase_AS"/>
</dbReference>
<dbReference type="PANTHER" id="PTHR24349">
    <property type="entry name" value="SERINE/THREONINE-PROTEIN KINASE"/>
    <property type="match status" value="1"/>
</dbReference>
<dbReference type="Pfam" id="PF00069">
    <property type="entry name" value="Pkinase"/>
    <property type="match status" value="1"/>
</dbReference>
<dbReference type="SMART" id="SM00220">
    <property type="entry name" value="S_TKc"/>
    <property type="match status" value="1"/>
</dbReference>
<dbReference type="SUPFAM" id="SSF56112">
    <property type="entry name" value="Protein kinase-like (PK-like)"/>
    <property type="match status" value="1"/>
</dbReference>
<dbReference type="PROSITE" id="PS00107">
    <property type="entry name" value="PROTEIN_KINASE_ATP"/>
    <property type="match status" value="1"/>
</dbReference>
<dbReference type="PROSITE" id="PS50011">
    <property type="entry name" value="PROTEIN_KINASE_DOM"/>
    <property type="match status" value="1"/>
</dbReference>
<dbReference type="PROSITE" id="PS00108">
    <property type="entry name" value="PROTEIN_KINASE_ST"/>
    <property type="match status" value="1"/>
</dbReference>
<organism>
    <name type="scientific">Arabidopsis thaliana</name>
    <name type="common">Mouse-ear cress</name>
    <dbReference type="NCBI Taxonomy" id="3702"/>
    <lineage>
        <taxon>Eukaryota</taxon>
        <taxon>Viridiplantae</taxon>
        <taxon>Streptophyta</taxon>
        <taxon>Embryophyta</taxon>
        <taxon>Tracheophyta</taxon>
        <taxon>Spermatophyta</taxon>
        <taxon>Magnoliopsida</taxon>
        <taxon>eudicotyledons</taxon>
        <taxon>Gunneridae</taxon>
        <taxon>Pentapetalae</taxon>
        <taxon>rosids</taxon>
        <taxon>malvids</taxon>
        <taxon>Brassicales</taxon>
        <taxon>Brassicaceae</taxon>
        <taxon>Camelineae</taxon>
        <taxon>Arabidopsis</taxon>
    </lineage>
</organism>
<keyword id="KW-0067">ATP-binding</keyword>
<keyword id="KW-0418">Kinase</keyword>
<keyword id="KW-0547">Nucleotide-binding</keyword>
<keyword id="KW-0670">Pyruvate</keyword>
<keyword id="KW-1185">Reference proteome</keyword>
<keyword id="KW-0723">Serine/threonine-protein kinase</keyword>
<keyword id="KW-0808">Transferase</keyword>
<feature type="chain" id="PRO_0000403719" description="Phosphoenolpyruvate carboxylase kinase 2">
    <location>
        <begin position="1"/>
        <end position="278"/>
    </location>
</feature>
<feature type="domain" description="Protein kinase" evidence="1">
    <location>
        <begin position="11"/>
        <end position="269"/>
    </location>
</feature>
<feature type="active site" description="Proton acceptor" evidence="1 2">
    <location>
        <position position="137"/>
    </location>
</feature>
<feature type="binding site" evidence="1">
    <location>
        <begin position="17"/>
        <end position="25"/>
    </location>
    <ligand>
        <name>ATP</name>
        <dbReference type="ChEBI" id="CHEBI:30616"/>
    </ligand>
</feature>
<feature type="binding site" evidence="1">
    <location>
        <position position="40"/>
    </location>
    <ligand>
        <name>ATP</name>
        <dbReference type="ChEBI" id="CHEBI:30616"/>
    </ligand>
</feature>
<feature type="sequence conflict" description="In Ref. 1; AAK43710/AAK84668." evidence="6" ref="1">
    <original>I</original>
    <variation>T</variation>
    <location>
        <position position="48"/>
    </location>
</feature>
<feature type="sequence conflict" description="In Ref. 1; AAK43710/AAK84668." evidence="6" ref="1">
    <original>S</original>
    <variation>R</variation>
    <location>
        <position position="123"/>
    </location>
</feature>
<sequence>MTREFELENNYQLCDEIGRGRFGTITRCFSPATKEFYACKTIDKRVLIDALDRECIETEPRIMAMLPPHPNIIRIFDLYETEDSLAIVMELVDPPMTIYDRLISAGGRLSESESASYAKQILSALAHCHRCDVVHRDVKPDNVLVDLVSGGVKLCDFGSAVWLGGETAEGVVGTPYYVAPEVVMGRKYDEKVDIWSAGVVIYTMLAGEPPFNGETAEDIFESILRGNLRFPPKKFGSVSSEAKDLLRKMICRDVSRRFSAEDALRHSWMMNVGNLQSN</sequence>
<proteinExistence type="evidence at protein level"/>